<sequence>MAPRKFFVGGNWKMNGDKKSLGELIHTLNGAKLSADTEVVCGAPSIYLDFARQKLDAKIGVAAQNCYKVPKGAFTGEISPAMIKDIGAAWVILGHSERRHVFGESDELIGQKVAHALAEGLGVIACIGEKLDEREAGITEKVVFEQTKAIADNVKDWSKVVLAYEPVWAIGTGKTATPQQAQEVHEKLRGWLKSHVSDAVAQSTRIIYGGSVTGGNCKELASQHDVDGFLVGGASLKPEFVDIINAKH</sequence>
<keyword id="KW-0002">3D-structure</keyword>
<keyword id="KW-0963">Cytoplasm</keyword>
<keyword id="KW-0903">Direct protein sequencing</keyword>
<keyword id="KW-0312">Gluconeogenesis</keyword>
<keyword id="KW-0324">Glycolysis</keyword>
<keyword id="KW-0413">Isomerase</keyword>
<keyword id="KW-0456">Lyase</keyword>
<keyword id="KW-1185">Reference proteome</keyword>
<accession>P00940</accession>
<name>TPIS_CHICK</name>
<protein>
    <recommendedName>
        <fullName>Triosephosphate isomerase</fullName>
        <shortName>TIM</shortName>
        <ecNumber evidence="2">5.3.1.1</ecNumber>
    </recommendedName>
    <alternativeName>
        <fullName evidence="1">Methylglyoxal synthase</fullName>
        <ecNumber evidence="1">4.2.3.3</ecNumber>
    </alternativeName>
    <alternativeName>
        <fullName>Triose-phosphate isomerase</fullName>
    </alternativeName>
</protein>
<reference key="1">
    <citation type="journal article" date="1985" name="Proc. Natl. Acad. Sci. U.S.A.">
        <title>Chicken triosephosphate isomerase complements an Escherichia coli deficiency.</title>
        <authorList>
            <person name="Straus D."/>
            <person name="Gilbert W."/>
        </authorList>
    </citation>
    <scope>NUCLEOTIDE SEQUENCE [MRNA]</scope>
</reference>
<reference key="2">
    <citation type="journal article" date="1985" name="Mol. Cell. Biol.">
        <title>Genetic engineering in the Precambrian: structure of the chicken triosephosphate isomerase gene.</title>
        <authorList>
            <person name="Straus D."/>
            <person name="Gilbert W."/>
        </authorList>
    </citation>
    <scope>NUCLEOTIDE SEQUENCE [GENOMIC DNA]</scope>
</reference>
<reference key="3">
    <citation type="journal article" date="1974" name="Biochem. J.">
        <title>Studies on the subunit structure and amino acid sequence of trisoe phosphate isomerase from chicken breast muscle.</title>
        <authorList>
            <person name="Furth A.J."/>
            <person name="Milman J.D."/>
            <person name="Priddle J.D."/>
            <person name="Offord R.E."/>
        </authorList>
    </citation>
    <scope>PROTEIN SEQUENCE OF 2-248</scope>
</reference>
<reference key="4">
    <citation type="journal article" date="1975" name="Nature">
        <title>Structure of chicken muscle triose phosphate isomerase determined crystallographically at 2.5-A resolution using amino acid sequence data.</title>
        <authorList>
            <person name="Banner D.W."/>
            <person name="Bloomer A.C."/>
            <person name="Petsko G.A."/>
            <person name="Phillips D.C."/>
            <person name="Pogson C.I."/>
            <person name="Wilson I.A."/>
            <person name="Corran P.H."/>
            <person name="Furth A.J."/>
            <person name="Milman J.D."/>
            <person name="Offord R.E."/>
            <person name="Priddle J.D."/>
            <person name="Waley S.G."/>
        </authorList>
    </citation>
    <scope>X-RAY CRYSTALLOGRAPHY (2.5 ANGSTROMS)</scope>
    <scope>SEQUENCE REVISION</scope>
</reference>
<reference key="5">
    <citation type="journal article" date="1990" name="Biochemistry">
        <title>How can a catalytic lesion be offset? The energetics of two pseudorevertant triosephosphate isomerases.</title>
        <authorList>
            <person name="Blacklow S.C."/>
            <person name="Knowles J.R."/>
        </authorList>
    </citation>
    <scope>X-RAY CRYSTALLOGRAPHY (1.9 ANGSTROMS)</scope>
    <scope>MUTAGENESIS OF HIS-95 AND GLU-165</scope>
</reference>
<reference key="6">
    <citation type="journal article" date="1976" name="Biochem. Biophys. Res. Commun.">
        <title>Atomic coordinates for triose phosphate isomerase from chicken muscle.</title>
        <authorList>
            <person name="Banner D.W."/>
            <person name="Bloomer A.C."/>
            <person name="Petsko G.A."/>
            <person name="Phillips D.C."/>
            <person name="Wilson I.A."/>
        </authorList>
    </citation>
    <scope>X-RAY CRYSTALLOGRAPHY (2.5 ANGSTROMS)</scope>
</reference>
<reference key="7">
    <citation type="journal article" date="1992" name="J. Mol. Biol.">
        <title>Comparison of the refined crystal structures of liganded and unliganded chicken, yeast and trypanosomal triosephosphate isomerase.</title>
        <authorList>
            <person name="Wierenga R.K."/>
            <person name="Noble M.E.M."/>
            <person name="Davenport R.C."/>
        </authorList>
    </citation>
    <scope>COMPARISON OF X-RAY STRUCTURES</scope>
</reference>
<reference key="8">
    <citation type="journal article" date="1994" name="Biochemistry">
        <title>Crystal structure of recombinant chicken triosephosphate isomerase-phosphoglycolohydroxamate complex at 1.8-A resolution.</title>
        <authorList>
            <person name="Zhang Z."/>
            <person name="Sugio S."/>
            <person name="Komives E.A."/>
            <person name="Liu K.D."/>
            <person name="Knowles J.R."/>
            <person name="Petsko G.A."/>
            <person name="Ringe D."/>
        </authorList>
    </citation>
    <scope>X-RAY CRYSTALLOGRAPHY (1.8 ANGSTROMS) OF MUTANT ASP-165 IN COMPLEX WITH SUBSTRATE ANALOG</scope>
    <scope>ACTIVE SITE</scope>
    <scope>SUBSTRATE BINDING-SITE</scope>
</reference>
<reference key="9">
    <citation type="submission" date="1998-08" db="PDB data bank">
        <authorList>
            <person name="Artymiuk P.J."/>
            <person name="Taylor W.R."/>
            <person name="Phillips D.C."/>
        </authorList>
    </citation>
    <scope>X-RAY CRYSTALLOGRAPHY (2.5 ANGSTROMS)</scope>
</reference>
<feature type="initiator methionine" description="Removed" evidence="4">
    <location>
        <position position="1"/>
    </location>
</feature>
<feature type="chain" id="PRO_0000090121" description="Triosephosphate isomerase">
    <location>
        <begin position="2"/>
        <end position="248"/>
    </location>
</feature>
<feature type="active site" description="Electrophile" evidence="5 7">
    <location>
        <position position="95"/>
    </location>
</feature>
<feature type="active site" description="Proton acceptor" evidence="5 7">
    <location>
        <position position="165"/>
    </location>
</feature>
<feature type="binding site" evidence="5 7">
    <location>
        <position position="11"/>
    </location>
    <ligand>
        <name>substrate</name>
    </ligand>
</feature>
<feature type="binding site" evidence="5 7">
    <location>
        <position position="13"/>
    </location>
    <ligand>
        <name>substrate</name>
    </ligand>
</feature>
<feature type="mutagenesis site" description="Reduces activity 5000-fold." evidence="3">
    <original>H</original>
    <variation>N</variation>
    <location>
        <position position="95"/>
    </location>
</feature>
<feature type="mutagenesis site" description="Reduces activity 300-fold." evidence="3">
    <original>E</original>
    <variation>D</variation>
    <location>
        <position position="165"/>
    </location>
</feature>
<feature type="sequence conflict" description="In Ref. 3; AA sequence." evidence="6" ref="3">
    <original>DK</original>
    <variation>KR</variation>
    <location>
        <begin position="17"/>
        <end position="18"/>
    </location>
</feature>
<feature type="sequence conflict" description="In Ref. 3; AA sequence." evidence="6" ref="3">
    <original>N</original>
    <variation>D</variation>
    <location>
        <position position="29"/>
    </location>
</feature>
<feature type="sequence conflict" description="In Ref. 3; AA sequence." evidence="6" ref="3">
    <original>EQ</original>
    <variation>QE</variation>
    <location>
        <begin position="145"/>
        <end position="146"/>
    </location>
</feature>
<feature type="sequence conflict" description="In Ref. 3; AA sequence." evidence="6" ref="3">
    <original>S</original>
    <variation>T</variation>
    <location>
        <position position="194"/>
    </location>
</feature>
<feature type="sequence conflict" description="In Ref. 3; AA sequence." evidence="6" ref="3">
    <original>QST</original>
    <variation>VQS</variation>
    <location>
        <begin position="202"/>
        <end position="204"/>
    </location>
</feature>
<feature type="strand" evidence="9">
    <location>
        <begin position="6"/>
        <end position="11"/>
    </location>
</feature>
<feature type="helix" evidence="9">
    <location>
        <begin position="18"/>
        <end position="30"/>
    </location>
</feature>
<feature type="strand" evidence="9">
    <location>
        <begin position="37"/>
        <end position="43"/>
    </location>
</feature>
<feature type="helix" evidence="9">
    <location>
        <begin position="45"/>
        <end position="47"/>
    </location>
</feature>
<feature type="helix" evidence="9">
    <location>
        <begin position="48"/>
        <end position="54"/>
    </location>
</feature>
<feature type="strand" evidence="9">
    <location>
        <begin position="59"/>
        <end position="64"/>
    </location>
</feature>
<feature type="strand" evidence="9">
    <location>
        <begin position="68"/>
        <end position="73"/>
    </location>
</feature>
<feature type="helix" evidence="9">
    <location>
        <begin position="80"/>
        <end position="85"/>
    </location>
</feature>
<feature type="strand" evidence="9">
    <location>
        <begin position="90"/>
        <end position="94"/>
    </location>
</feature>
<feature type="helix" evidence="9">
    <location>
        <begin position="96"/>
        <end position="100"/>
    </location>
</feature>
<feature type="helix" evidence="9">
    <location>
        <begin position="106"/>
        <end position="118"/>
    </location>
</feature>
<feature type="strand" evidence="9">
    <location>
        <begin position="122"/>
        <end position="127"/>
    </location>
</feature>
<feature type="helix" evidence="9">
    <location>
        <begin position="131"/>
        <end position="136"/>
    </location>
</feature>
<feature type="helix" evidence="9">
    <location>
        <begin position="139"/>
        <end position="151"/>
    </location>
</feature>
<feature type="helix" evidence="9">
    <location>
        <begin position="157"/>
        <end position="159"/>
    </location>
</feature>
<feature type="strand" evidence="9">
    <location>
        <begin position="160"/>
        <end position="164"/>
    </location>
</feature>
<feature type="helix" evidence="8">
    <location>
        <begin position="167"/>
        <end position="169"/>
    </location>
</feature>
<feature type="strand" evidence="8">
    <location>
        <begin position="170"/>
        <end position="173"/>
    </location>
</feature>
<feature type="helix" evidence="9">
    <location>
        <begin position="178"/>
        <end position="195"/>
    </location>
</feature>
<feature type="helix" evidence="9">
    <location>
        <begin position="198"/>
        <end position="203"/>
    </location>
</feature>
<feature type="strand" evidence="9">
    <location>
        <begin position="206"/>
        <end position="208"/>
    </location>
</feature>
<feature type="turn" evidence="9">
    <location>
        <begin position="214"/>
        <end position="216"/>
    </location>
</feature>
<feature type="helix" evidence="9">
    <location>
        <begin position="217"/>
        <end position="221"/>
    </location>
</feature>
<feature type="strand" evidence="9">
    <location>
        <begin position="228"/>
        <end position="232"/>
    </location>
</feature>
<feature type="helix" evidence="9">
    <location>
        <begin position="233"/>
        <end position="236"/>
    </location>
</feature>
<feature type="helix" evidence="9">
    <location>
        <begin position="240"/>
        <end position="244"/>
    </location>
</feature>
<feature type="turn" evidence="9">
    <location>
        <begin position="245"/>
        <end position="247"/>
    </location>
</feature>
<gene>
    <name type="primary">TPI1</name>
</gene>
<dbReference type="EC" id="5.3.1.1" evidence="2"/>
<dbReference type="EC" id="4.2.3.3" evidence="1"/>
<dbReference type="EMBL" id="M11314">
    <property type="protein sequence ID" value="AAA49094.1"/>
    <property type="molecule type" value="mRNA"/>
</dbReference>
<dbReference type="EMBL" id="M11941">
    <property type="protein sequence ID" value="AAA49095.1"/>
    <property type="molecule type" value="Genomic_DNA"/>
</dbReference>
<dbReference type="PIR" id="A23448">
    <property type="entry name" value="ISCHT"/>
</dbReference>
<dbReference type="RefSeq" id="NP_990782.1">
    <property type="nucleotide sequence ID" value="NM_205451.1"/>
</dbReference>
<dbReference type="PDB" id="1SPQ">
    <property type="method" value="X-ray"/>
    <property type="resolution" value="2.16 A"/>
    <property type="chains" value="A/B=2-248"/>
</dbReference>
<dbReference type="PDB" id="1SQ7">
    <property type="method" value="X-ray"/>
    <property type="resolution" value="2.85 A"/>
    <property type="chains" value="A/B=2-248"/>
</dbReference>
<dbReference type="PDB" id="1SSD">
    <property type="method" value="X-ray"/>
    <property type="resolution" value="2.90 A"/>
    <property type="chains" value="A/B=2-248"/>
</dbReference>
<dbReference type="PDB" id="1SSG">
    <property type="method" value="X-ray"/>
    <property type="resolution" value="2.90 A"/>
    <property type="chains" value="A/B=2-248"/>
</dbReference>
<dbReference type="PDB" id="1SU5">
    <property type="method" value="X-ray"/>
    <property type="resolution" value="2.70 A"/>
    <property type="chains" value="A/B=2-248"/>
</dbReference>
<dbReference type="PDB" id="1SW0">
    <property type="method" value="X-ray"/>
    <property type="resolution" value="1.71 A"/>
    <property type="chains" value="A/B=1-248"/>
</dbReference>
<dbReference type="PDB" id="1SW3">
    <property type="method" value="X-ray"/>
    <property type="resolution" value="2.03 A"/>
    <property type="chains" value="A/B=1-248"/>
</dbReference>
<dbReference type="PDB" id="1SW7">
    <property type="method" value="X-ray"/>
    <property type="resolution" value="2.22 A"/>
    <property type="chains" value="A/B=1-248"/>
</dbReference>
<dbReference type="PDB" id="1TIM">
    <property type="method" value="X-ray"/>
    <property type="resolution" value="2.50 A"/>
    <property type="chains" value="A/B=2-248"/>
</dbReference>
<dbReference type="PDB" id="1TPB">
    <property type="method" value="X-ray"/>
    <property type="resolution" value="1.90 A"/>
    <property type="chains" value="1/2=2-248"/>
</dbReference>
<dbReference type="PDB" id="1TPC">
    <property type="method" value="X-ray"/>
    <property type="resolution" value="1.90 A"/>
    <property type="chains" value="1/2=2-248"/>
</dbReference>
<dbReference type="PDB" id="1TPH">
    <property type="method" value="X-ray"/>
    <property type="resolution" value="1.80 A"/>
    <property type="chains" value="1/2=2-248"/>
</dbReference>
<dbReference type="PDB" id="1TPU">
    <property type="method" value="X-ray"/>
    <property type="resolution" value="1.90 A"/>
    <property type="chains" value="A/B=2-248"/>
</dbReference>
<dbReference type="PDB" id="1TPV">
    <property type="method" value="X-ray"/>
    <property type="resolution" value="1.90 A"/>
    <property type="chains" value="A/B=2-248"/>
</dbReference>
<dbReference type="PDB" id="1TPW">
    <property type="method" value="X-ray"/>
    <property type="resolution" value="1.90 A"/>
    <property type="chains" value="A/B=2-248"/>
</dbReference>
<dbReference type="PDB" id="4P61">
    <property type="method" value="X-ray"/>
    <property type="resolution" value="1.34 A"/>
    <property type="chains" value="A/B=1-248"/>
</dbReference>
<dbReference type="PDB" id="8TIM">
    <property type="method" value="X-ray"/>
    <property type="resolution" value="2.50 A"/>
    <property type="chains" value="A/B=2-248"/>
</dbReference>
<dbReference type="PDBsum" id="1SPQ"/>
<dbReference type="PDBsum" id="1SQ7"/>
<dbReference type="PDBsum" id="1SSD"/>
<dbReference type="PDBsum" id="1SSG"/>
<dbReference type="PDBsum" id="1SU5"/>
<dbReference type="PDBsum" id="1SW0"/>
<dbReference type="PDBsum" id="1SW3"/>
<dbReference type="PDBsum" id="1SW7"/>
<dbReference type="PDBsum" id="1TIM"/>
<dbReference type="PDBsum" id="1TPB"/>
<dbReference type="PDBsum" id="1TPC"/>
<dbReference type="PDBsum" id="1TPH"/>
<dbReference type="PDBsum" id="1TPU"/>
<dbReference type="PDBsum" id="1TPV"/>
<dbReference type="PDBsum" id="1TPW"/>
<dbReference type="PDBsum" id="4P61"/>
<dbReference type="PDBsum" id="8TIM"/>
<dbReference type="BMRB" id="P00940"/>
<dbReference type="SMR" id="P00940"/>
<dbReference type="BioGRID" id="676684">
    <property type="interactions" value="1"/>
</dbReference>
<dbReference type="FunCoup" id="P00940">
    <property type="interactions" value="1935"/>
</dbReference>
<dbReference type="IntAct" id="P00940">
    <property type="interactions" value="1"/>
</dbReference>
<dbReference type="STRING" id="9031.ENSGALP00000023396"/>
<dbReference type="PaxDb" id="9031-ENSGALP00000023396"/>
<dbReference type="Ensembl" id="ENSGALT00010057016.1">
    <property type="protein sequence ID" value="ENSGALP00010034676.1"/>
    <property type="gene ID" value="ENSGALG00010023392.1"/>
</dbReference>
<dbReference type="GeneID" id="396435"/>
<dbReference type="KEGG" id="gga:396435"/>
<dbReference type="CTD" id="7167"/>
<dbReference type="VEuPathDB" id="HostDB:geneid_396435"/>
<dbReference type="eggNOG" id="KOG1643">
    <property type="taxonomic scope" value="Eukaryota"/>
</dbReference>
<dbReference type="GeneTree" id="ENSGT00390000013354"/>
<dbReference type="HOGENOM" id="CLU_024251_2_0_1"/>
<dbReference type="InParanoid" id="P00940"/>
<dbReference type="OMA" id="NWKMHMT"/>
<dbReference type="OrthoDB" id="6715177at2759"/>
<dbReference type="PhylomeDB" id="P00940"/>
<dbReference type="TreeFam" id="TF300829"/>
<dbReference type="BRENDA" id="5.3.1.1">
    <property type="organism ID" value="1306"/>
</dbReference>
<dbReference type="Reactome" id="R-GGA-352875">
    <property type="pathway name" value="Gluconeogenesis"/>
</dbReference>
<dbReference type="Reactome" id="R-GGA-352882">
    <property type="pathway name" value="Glycolysis"/>
</dbReference>
<dbReference type="Reactome" id="R-GGA-70171">
    <property type="pathway name" value="Glycolysis"/>
</dbReference>
<dbReference type="Reactome" id="R-GGA-70263">
    <property type="pathway name" value="Gluconeogenesis"/>
</dbReference>
<dbReference type="SABIO-RK" id="P00940"/>
<dbReference type="UniPathway" id="UPA00109">
    <property type="reaction ID" value="UER00189"/>
</dbReference>
<dbReference type="UniPathway" id="UPA00138"/>
<dbReference type="EvolutionaryTrace" id="P00940"/>
<dbReference type="PRO" id="PR:P00940"/>
<dbReference type="Proteomes" id="UP000000539">
    <property type="component" value="Chromosome 1"/>
</dbReference>
<dbReference type="Bgee" id="ENSGALG00000014526">
    <property type="expression patterns" value="Expressed in muscle tissue and 14 other cell types or tissues"/>
</dbReference>
<dbReference type="GO" id="GO:0005829">
    <property type="term" value="C:cytosol"/>
    <property type="evidence" value="ECO:0000318"/>
    <property type="project" value="GO_Central"/>
</dbReference>
<dbReference type="GO" id="GO:0008929">
    <property type="term" value="F:methylglyoxal synthase activity"/>
    <property type="evidence" value="ECO:0000250"/>
    <property type="project" value="UniProtKB"/>
</dbReference>
<dbReference type="GO" id="GO:0042803">
    <property type="term" value="F:protein homodimerization activity"/>
    <property type="evidence" value="ECO:0000250"/>
    <property type="project" value="UniProtKB"/>
</dbReference>
<dbReference type="GO" id="GO:0004807">
    <property type="term" value="F:triose-phosphate isomerase activity"/>
    <property type="evidence" value="ECO:0000250"/>
    <property type="project" value="UniProtKB"/>
</dbReference>
<dbReference type="GO" id="GO:0031625">
    <property type="term" value="F:ubiquitin protein ligase binding"/>
    <property type="evidence" value="ECO:0007669"/>
    <property type="project" value="Ensembl"/>
</dbReference>
<dbReference type="GO" id="GO:0061621">
    <property type="term" value="P:canonical glycolysis"/>
    <property type="evidence" value="ECO:0007669"/>
    <property type="project" value="Ensembl"/>
</dbReference>
<dbReference type="GO" id="GO:0006094">
    <property type="term" value="P:gluconeogenesis"/>
    <property type="evidence" value="ECO:0000318"/>
    <property type="project" value="GO_Central"/>
</dbReference>
<dbReference type="GO" id="GO:0046166">
    <property type="term" value="P:glyceraldehyde-3-phosphate biosynthetic process"/>
    <property type="evidence" value="ECO:0000250"/>
    <property type="project" value="UniProtKB"/>
</dbReference>
<dbReference type="GO" id="GO:0019563">
    <property type="term" value="P:glycerol catabolic process"/>
    <property type="evidence" value="ECO:0000318"/>
    <property type="project" value="GO_Central"/>
</dbReference>
<dbReference type="GO" id="GO:0006096">
    <property type="term" value="P:glycolytic process"/>
    <property type="evidence" value="ECO:0000318"/>
    <property type="project" value="GO_Central"/>
</dbReference>
<dbReference type="GO" id="GO:0019242">
    <property type="term" value="P:methylglyoxal biosynthetic process"/>
    <property type="evidence" value="ECO:0000250"/>
    <property type="project" value="UniProtKB"/>
</dbReference>
<dbReference type="CDD" id="cd00311">
    <property type="entry name" value="TIM"/>
    <property type="match status" value="1"/>
</dbReference>
<dbReference type="FunFam" id="3.20.20.70:FF:000025">
    <property type="entry name" value="Triosephosphate isomerase"/>
    <property type="match status" value="1"/>
</dbReference>
<dbReference type="Gene3D" id="3.20.20.70">
    <property type="entry name" value="Aldolase class I"/>
    <property type="match status" value="1"/>
</dbReference>
<dbReference type="HAMAP" id="MF_00147_B">
    <property type="entry name" value="TIM_B"/>
    <property type="match status" value="1"/>
</dbReference>
<dbReference type="InterPro" id="IPR013785">
    <property type="entry name" value="Aldolase_TIM"/>
</dbReference>
<dbReference type="InterPro" id="IPR035990">
    <property type="entry name" value="TIM_sf"/>
</dbReference>
<dbReference type="InterPro" id="IPR022896">
    <property type="entry name" value="TrioseP_Isoase_bac/euk"/>
</dbReference>
<dbReference type="InterPro" id="IPR000652">
    <property type="entry name" value="Triosephosphate_isomerase"/>
</dbReference>
<dbReference type="InterPro" id="IPR020861">
    <property type="entry name" value="Triosephosphate_isomerase_AS"/>
</dbReference>
<dbReference type="NCBIfam" id="TIGR00419">
    <property type="entry name" value="tim"/>
    <property type="match status" value="1"/>
</dbReference>
<dbReference type="PANTHER" id="PTHR21139">
    <property type="entry name" value="TRIOSEPHOSPHATE ISOMERASE"/>
    <property type="match status" value="1"/>
</dbReference>
<dbReference type="PANTHER" id="PTHR21139:SF2">
    <property type="entry name" value="TRIOSEPHOSPHATE ISOMERASE"/>
    <property type="match status" value="1"/>
</dbReference>
<dbReference type="Pfam" id="PF00121">
    <property type="entry name" value="TIM"/>
    <property type="match status" value="1"/>
</dbReference>
<dbReference type="SUPFAM" id="SSF51351">
    <property type="entry name" value="Triosephosphate isomerase (TIM)"/>
    <property type="match status" value="1"/>
</dbReference>
<dbReference type="PROSITE" id="PS00171">
    <property type="entry name" value="TIM_1"/>
    <property type="match status" value="1"/>
</dbReference>
<dbReference type="PROSITE" id="PS51440">
    <property type="entry name" value="TIM_2"/>
    <property type="match status" value="1"/>
</dbReference>
<proteinExistence type="evidence at protein level"/>
<evidence type="ECO:0000250" key="1">
    <source>
        <dbReference type="UniProtKB" id="P00939"/>
    </source>
</evidence>
<evidence type="ECO:0000255" key="2">
    <source>
        <dbReference type="PROSITE-ProRule" id="PRU10127"/>
    </source>
</evidence>
<evidence type="ECO:0000269" key="3">
    <source>
    </source>
</evidence>
<evidence type="ECO:0000269" key="4">
    <source>
    </source>
</evidence>
<evidence type="ECO:0000269" key="5">
    <source>
    </source>
</evidence>
<evidence type="ECO:0000305" key="6"/>
<evidence type="ECO:0007744" key="7">
    <source>
        <dbReference type="PDB" id="1TPH"/>
    </source>
</evidence>
<evidence type="ECO:0007829" key="8">
    <source>
        <dbReference type="PDB" id="1SW0"/>
    </source>
</evidence>
<evidence type="ECO:0007829" key="9">
    <source>
        <dbReference type="PDB" id="4P61"/>
    </source>
</evidence>
<comment type="function">
    <text evidence="1">Triosephosphate isomerase is an extremely efficient metabolic enzyme that catalyzes the interconversion between dihydroxyacetone phosphate (DHAP) and D-glyceraldehyde-3-phosphate (G3P) in glycolysis and gluconeogenesis.</text>
</comment>
<comment type="function">
    <text evidence="1">It is also responsible for the non-negligible production of methylglyoxal a reactive cytotoxic side-product that modifies and can alter proteins, DNA and lipids.</text>
</comment>
<comment type="catalytic activity">
    <reaction evidence="1">
        <text>dihydroxyacetone phosphate = methylglyoxal + phosphate</text>
        <dbReference type="Rhea" id="RHEA:17937"/>
        <dbReference type="ChEBI" id="CHEBI:17158"/>
        <dbReference type="ChEBI" id="CHEBI:43474"/>
        <dbReference type="ChEBI" id="CHEBI:57642"/>
        <dbReference type="EC" id="4.2.3.3"/>
    </reaction>
</comment>
<comment type="catalytic activity">
    <reaction evidence="2">
        <text>D-glyceraldehyde 3-phosphate = dihydroxyacetone phosphate</text>
        <dbReference type="Rhea" id="RHEA:18585"/>
        <dbReference type="ChEBI" id="CHEBI:57642"/>
        <dbReference type="ChEBI" id="CHEBI:59776"/>
        <dbReference type="EC" id="5.3.1.1"/>
    </reaction>
</comment>
<comment type="pathway">
    <text evidence="2">Carbohydrate degradation; glycolysis; D-glyceraldehyde 3-phosphate from glycerone phosphate: step 1/1.</text>
</comment>
<comment type="pathway">
    <text evidence="2">Carbohydrate biosynthesis; gluconeogenesis.</text>
</comment>
<comment type="subunit">
    <text evidence="2 5">Homodimer.</text>
</comment>
<comment type="subcellular location">
    <subcellularLocation>
        <location evidence="2">Cytoplasm</location>
    </subcellularLocation>
</comment>
<comment type="similarity">
    <text evidence="6">Belongs to the triosephosphate isomerase family.</text>
</comment>
<organism>
    <name type="scientific">Gallus gallus</name>
    <name type="common">Chicken</name>
    <dbReference type="NCBI Taxonomy" id="9031"/>
    <lineage>
        <taxon>Eukaryota</taxon>
        <taxon>Metazoa</taxon>
        <taxon>Chordata</taxon>
        <taxon>Craniata</taxon>
        <taxon>Vertebrata</taxon>
        <taxon>Euteleostomi</taxon>
        <taxon>Archelosauria</taxon>
        <taxon>Archosauria</taxon>
        <taxon>Dinosauria</taxon>
        <taxon>Saurischia</taxon>
        <taxon>Theropoda</taxon>
        <taxon>Coelurosauria</taxon>
        <taxon>Aves</taxon>
        <taxon>Neognathae</taxon>
        <taxon>Galloanserae</taxon>
        <taxon>Galliformes</taxon>
        <taxon>Phasianidae</taxon>
        <taxon>Phasianinae</taxon>
        <taxon>Gallus</taxon>
    </lineage>
</organism>